<dbReference type="EMBL" id="AC138089">
    <property type="status" value="NOT_ANNOTATED_CDS"/>
    <property type="molecule type" value="Genomic_DNA"/>
</dbReference>
<dbReference type="EMBL" id="U86215">
    <property type="protein sequence ID" value="AAC39611.1"/>
    <property type="molecule type" value="Genomic_DNA"/>
</dbReference>
<dbReference type="EMBL" id="AF399613">
    <property type="protein sequence ID" value="AAK95098.1"/>
    <property type="molecule type" value="Genomic_DNA"/>
</dbReference>
<dbReference type="EMBL" id="BK004463">
    <property type="protein sequence ID" value="DAA04861.1"/>
    <property type="molecule type" value="Genomic_DNA"/>
</dbReference>
<dbReference type="RefSeq" id="NP_112166.1">
    <property type="nucleotide sequence ID" value="NM_030904.1"/>
</dbReference>
<dbReference type="SMR" id="O43869"/>
<dbReference type="BioGRID" id="117796">
    <property type="interactions" value="4"/>
</dbReference>
<dbReference type="FunCoup" id="O43869">
    <property type="interactions" value="478"/>
</dbReference>
<dbReference type="IntAct" id="O43869">
    <property type="interactions" value="1"/>
</dbReference>
<dbReference type="STRING" id="9606.ENSP00000355430"/>
<dbReference type="GlyCosmos" id="O43869">
    <property type="glycosylation" value="1 site, No reported glycans"/>
</dbReference>
<dbReference type="GlyGen" id="O43869">
    <property type="glycosylation" value="1 site"/>
</dbReference>
<dbReference type="iPTMnet" id="O43869"/>
<dbReference type="PhosphoSitePlus" id="O43869"/>
<dbReference type="BioMuta" id="OR2T1"/>
<dbReference type="MassIVE" id="O43869"/>
<dbReference type="PaxDb" id="9606-ENSP00000355430"/>
<dbReference type="DNASU" id="26696"/>
<dbReference type="Ensembl" id="ENST00000611851.1">
    <property type="protein sequence ID" value="ENSP00000479603.1"/>
    <property type="gene ID" value="ENSG00000273508.1"/>
</dbReference>
<dbReference type="Ensembl" id="ENST00000613540.1">
    <property type="protein sequence ID" value="ENSP00000482752.1"/>
    <property type="gene ID" value="ENSG00000275244.1"/>
</dbReference>
<dbReference type="GeneID" id="26696"/>
<dbReference type="KEGG" id="hsa:26696"/>
<dbReference type="UCSC" id="uc010pzm.2">
    <property type="organism name" value="human"/>
</dbReference>
<dbReference type="AGR" id="HGNC:8277"/>
<dbReference type="CTD" id="26696"/>
<dbReference type="DisGeNET" id="26696"/>
<dbReference type="GeneCards" id="OR2T1"/>
<dbReference type="HGNC" id="HGNC:8277">
    <property type="gene designation" value="OR2T1"/>
</dbReference>
<dbReference type="MalaCards" id="OR2T1"/>
<dbReference type="neXtProt" id="NX_O43869"/>
<dbReference type="PharmGKB" id="PA32201"/>
<dbReference type="eggNOG" id="ENOG502RTYZ">
    <property type="taxonomic scope" value="Eukaryota"/>
</dbReference>
<dbReference type="HOGENOM" id="CLU_012526_8_1_1"/>
<dbReference type="InParanoid" id="O43869"/>
<dbReference type="OrthoDB" id="10017003at2759"/>
<dbReference type="PAN-GO" id="O43869">
    <property type="GO annotations" value="0 GO annotations based on evolutionary models"/>
</dbReference>
<dbReference type="PhylomeDB" id="O43869"/>
<dbReference type="TreeFam" id="TF337295"/>
<dbReference type="PathwayCommons" id="O43869"/>
<dbReference type="Reactome" id="R-HSA-381753">
    <property type="pathway name" value="Olfactory Signaling Pathway"/>
</dbReference>
<dbReference type="Reactome" id="R-HSA-9752946">
    <property type="pathway name" value="Expression and translocation of olfactory receptors"/>
</dbReference>
<dbReference type="BioGRID-ORCS" id="26696">
    <property type="hits" value="10 hits in 756 CRISPR screens"/>
</dbReference>
<dbReference type="GeneWiki" id="OR2T1"/>
<dbReference type="GenomeRNAi" id="26696"/>
<dbReference type="Pharos" id="O43869">
    <property type="development level" value="Tdark"/>
</dbReference>
<dbReference type="PRO" id="PR:O43869"/>
<dbReference type="Proteomes" id="UP000005640">
    <property type="component" value="Unplaced"/>
</dbReference>
<dbReference type="RNAct" id="O43869">
    <property type="molecule type" value="protein"/>
</dbReference>
<dbReference type="GO" id="GO:0005886">
    <property type="term" value="C:plasma membrane"/>
    <property type="evidence" value="ECO:0000318"/>
    <property type="project" value="GO_Central"/>
</dbReference>
<dbReference type="GO" id="GO:0004930">
    <property type="term" value="F:G protein-coupled receptor activity"/>
    <property type="evidence" value="ECO:0007669"/>
    <property type="project" value="UniProtKB-KW"/>
</dbReference>
<dbReference type="GO" id="GO:0004984">
    <property type="term" value="F:olfactory receptor activity"/>
    <property type="evidence" value="ECO:0000318"/>
    <property type="project" value="GO_Central"/>
</dbReference>
<dbReference type="GO" id="GO:0050911">
    <property type="term" value="P:detection of chemical stimulus involved in sensory perception of smell"/>
    <property type="evidence" value="ECO:0000318"/>
    <property type="project" value="GO_Central"/>
</dbReference>
<dbReference type="CDD" id="cd15421">
    <property type="entry name" value="7tmA_OR2T-like"/>
    <property type="match status" value="1"/>
</dbReference>
<dbReference type="FunFam" id="1.20.1070.10:FF:000008">
    <property type="entry name" value="Olfactory receptor"/>
    <property type="match status" value="1"/>
</dbReference>
<dbReference type="Gene3D" id="1.20.1070.10">
    <property type="entry name" value="Rhodopsin 7-helix transmembrane proteins"/>
    <property type="match status" value="1"/>
</dbReference>
<dbReference type="InterPro" id="IPR000276">
    <property type="entry name" value="GPCR_Rhodpsn"/>
</dbReference>
<dbReference type="InterPro" id="IPR017452">
    <property type="entry name" value="GPCR_Rhodpsn_7TM"/>
</dbReference>
<dbReference type="InterPro" id="IPR000725">
    <property type="entry name" value="Olfact_rcpt"/>
</dbReference>
<dbReference type="PANTHER" id="PTHR26453">
    <property type="entry name" value="OLFACTORY RECEPTOR"/>
    <property type="match status" value="1"/>
</dbReference>
<dbReference type="Pfam" id="PF13853">
    <property type="entry name" value="7tm_4"/>
    <property type="match status" value="1"/>
</dbReference>
<dbReference type="PRINTS" id="PR00237">
    <property type="entry name" value="GPCRRHODOPSN"/>
</dbReference>
<dbReference type="PRINTS" id="PR00245">
    <property type="entry name" value="OLFACTORYR"/>
</dbReference>
<dbReference type="SUPFAM" id="SSF81321">
    <property type="entry name" value="Family A G protein-coupled receptor-like"/>
    <property type="match status" value="1"/>
</dbReference>
<dbReference type="PROSITE" id="PS00237">
    <property type="entry name" value="G_PROTEIN_RECEP_F1_1"/>
    <property type="match status" value="1"/>
</dbReference>
<dbReference type="PROSITE" id="PS50262">
    <property type="entry name" value="G_PROTEIN_RECEP_F1_2"/>
    <property type="match status" value="1"/>
</dbReference>
<sequence length="369" mass="41996">MWQEYYFLNVFFPLLKVCCLTINSHVVILLPWECYHLIWKILPYIGTTVGSMEEYNTSSTDFTFMGLFNRKETSGLIFAIISIIFFTALMANGVMIFLIQTDLRLHTPMYFLLSHLSLIDMMYISTIVPKMLVNYLLDQRTISFVGCTAQHFLYLTLVGAEFFLLGLMAYDRYVAICNPLRYPVLMSRRVCWMIIAGSWFGGSLDGFLLTPITMSFPFCNSREINHFFCEAPAVLKLACADTALYETVMYVCCVLMLLIPFSVVLASYARILTTVQCMSSVEGRKKAFATCSSHMTVVSLFYGAAMYTYMLPHSYHKPAQDKVLSVFYTILTPMLNPLIYSLRNKDVTGALKRALGRFKGPQRVSGGVF</sequence>
<protein>
    <recommendedName>
        <fullName>Olfactory receptor 2T1</fullName>
    </recommendedName>
    <alternativeName>
        <fullName>Olfactory receptor 1-25</fullName>
        <shortName>OR1-25</shortName>
    </alternativeName>
    <alternativeName>
        <fullName>Olfactory receptor OR1-61</fullName>
    </alternativeName>
</protein>
<feature type="chain" id="PRO_0000150496" description="Olfactory receptor 2T1">
    <location>
        <begin position="1"/>
        <end position="369"/>
    </location>
</feature>
<feature type="topological domain" description="Extracellular" evidence="1">
    <location>
        <begin position="1"/>
        <end position="76"/>
    </location>
</feature>
<feature type="transmembrane region" description="Helical; Name=1" evidence="1">
    <location>
        <begin position="77"/>
        <end position="97"/>
    </location>
</feature>
<feature type="topological domain" description="Cytoplasmic" evidence="1">
    <location>
        <begin position="98"/>
        <end position="107"/>
    </location>
</feature>
<feature type="transmembrane region" description="Helical; Name=2" evidence="1">
    <location>
        <begin position="108"/>
        <end position="128"/>
    </location>
</feature>
<feature type="topological domain" description="Extracellular" evidence="1">
    <location>
        <begin position="129"/>
        <end position="148"/>
    </location>
</feature>
<feature type="transmembrane region" description="Helical; Name=3" evidence="1">
    <location>
        <begin position="149"/>
        <end position="169"/>
    </location>
</feature>
<feature type="topological domain" description="Cytoplasmic" evidence="1">
    <location>
        <begin position="170"/>
        <end position="191"/>
    </location>
</feature>
<feature type="transmembrane region" description="Helical; Name=4" evidence="1">
    <location>
        <begin position="192"/>
        <end position="212"/>
    </location>
</feature>
<feature type="topological domain" description="Extracellular" evidence="1">
    <location>
        <begin position="213"/>
        <end position="247"/>
    </location>
</feature>
<feature type="transmembrane region" description="Helical; Name=5" evidence="1">
    <location>
        <begin position="248"/>
        <end position="268"/>
    </location>
</feature>
<feature type="topological domain" description="Cytoplasmic" evidence="1">
    <location>
        <begin position="269"/>
        <end position="286"/>
    </location>
</feature>
<feature type="transmembrane region" description="Helical; Name=6" evidence="1">
    <location>
        <begin position="287"/>
        <end position="307"/>
    </location>
</feature>
<feature type="topological domain" description="Extracellular" evidence="1">
    <location>
        <begin position="308"/>
        <end position="321"/>
    </location>
</feature>
<feature type="transmembrane region" description="Helical; Name=7" evidence="1">
    <location>
        <begin position="322"/>
        <end position="342"/>
    </location>
</feature>
<feature type="topological domain" description="Cytoplasmic" evidence="1">
    <location>
        <begin position="343"/>
        <end position="369"/>
    </location>
</feature>
<feature type="glycosylation site" description="N-linked (GlcNAc...) asparagine" evidence="1">
    <location>
        <position position="56"/>
    </location>
</feature>
<feature type="disulfide bond" evidence="2">
    <location>
        <begin position="147"/>
        <end position="239"/>
    </location>
</feature>
<feature type="sequence variant" id="VAR_057541" description="In dbSNP:rs28599722.">
    <original>H</original>
    <variation>R</variation>
    <location>
        <position position="25"/>
    </location>
</feature>
<name>OR2T1_HUMAN</name>
<evidence type="ECO:0000255" key="1"/>
<evidence type="ECO:0000255" key="2">
    <source>
        <dbReference type="PROSITE-ProRule" id="PRU00521"/>
    </source>
</evidence>
<evidence type="ECO:0000305" key="3"/>
<keyword id="KW-1003">Cell membrane</keyword>
<keyword id="KW-1015">Disulfide bond</keyword>
<keyword id="KW-0297">G-protein coupled receptor</keyword>
<keyword id="KW-0325">Glycoprotein</keyword>
<keyword id="KW-0472">Membrane</keyword>
<keyword id="KW-0552">Olfaction</keyword>
<keyword id="KW-0675">Receptor</keyword>
<keyword id="KW-1185">Reference proteome</keyword>
<keyword id="KW-0716">Sensory transduction</keyword>
<keyword id="KW-0807">Transducer</keyword>
<keyword id="KW-0812">Transmembrane</keyword>
<keyword id="KW-1133">Transmembrane helix</keyword>
<organism>
    <name type="scientific">Homo sapiens</name>
    <name type="common">Human</name>
    <dbReference type="NCBI Taxonomy" id="9606"/>
    <lineage>
        <taxon>Eukaryota</taxon>
        <taxon>Metazoa</taxon>
        <taxon>Chordata</taxon>
        <taxon>Craniata</taxon>
        <taxon>Vertebrata</taxon>
        <taxon>Euteleostomi</taxon>
        <taxon>Mammalia</taxon>
        <taxon>Eutheria</taxon>
        <taxon>Euarchontoglires</taxon>
        <taxon>Primates</taxon>
        <taxon>Haplorrhini</taxon>
        <taxon>Catarrhini</taxon>
        <taxon>Hominidae</taxon>
        <taxon>Homo</taxon>
    </lineage>
</organism>
<comment type="function">
    <text evidence="3">Odorant receptor.</text>
</comment>
<comment type="subcellular location">
    <subcellularLocation>
        <location>Cell membrane</location>
        <topology>Multi-pass membrane protein</topology>
    </subcellularLocation>
</comment>
<comment type="similarity">
    <text evidence="2">Belongs to the G-protein coupled receptor 1 family.</text>
</comment>
<comment type="caution">
    <text evidence="3">It is uncertain whether Met-1 or Met-52 is the initiator.</text>
</comment>
<comment type="online information" name="Human Olfactory Receptor Data Exploratorium (HORDE)">
    <link uri="http://genome.weizmann.ac.il/horde/card/index/symbol:OR2T1"/>
</comment>
<proteinExistence type="inferred from homology"/>
<reference key="1">
    <citation type="journal article" date="2006" name="Nature">
        <title>The DNA sequence and biological annotation of human chromosome 1.</title>
        <authorList>
            <person name="Gregory S.G."/>
            <person name="Barlow K.F."/>
            <person name="McLay K.E."/>
            <person name="Kaul R."/>
            <person name="Swarbreck D."/>
            <person name="Dunham A."/>
            <person name="Scott C.E."/>
            <person name="Howe K.L."/>
            <person name="Woodfine K."/>
            <person name="Spencer C.C.A."/>
            <person name="Jones M.C."/>
            <person name="Gillson C."/>
            <person name="Searle S."/>
            <person name="Zhou Y."/>
            <person name="Kokocinski F."/>
            <person name="McDonald L."/>
            <person name="Evans R."/>
            <person name="Phillips K."/>
            <person name="Atkinson A."/>
            <person name="Cooper R."/>
            <person name="Jones C."/>
            <person name="Hall R.E."/>
            <person name="Andrews T.D."/>
            <person name="Lloyd C."/>
            <person name="Ainscough R."/>
            <person name="Almeida J.P."/>
            <person name="Ambrose K.D."/>
            <person name="Anderson F."/>
            <person name="Andrew R.W."/>
            <person name="Ashwell R.I.S."/>
            <person name="Aubin K."/>
            <person name="Babbage A.K."/>
            <person name="Bagguley C.L."/>
            <person name="Bailey J."/>
            <person name="Beasley H."/>
            <person name="Bethel G."/>
            <person name="Bird C.P."/>
            <person name="Bray-Allen S."/>
            <person name="Brown J.Y."/>
            <person name="Brown A.J."/>
            <person name="Buckley D."/>
            <person name="Burton J."/>
            <person name="Bye J."/>
            <person name="Carder C."/>
            <person name="Chapman J.C."/>
            <person name="Clark S.Y."/>
            <person name="Clarke G."/>
            <person name="Clee C."/>
            <person name="Cobley V."/>
            <person name="Collier R.E."/>
            <person name="Corby N."/>
            <person name="Coville G.J."/>
            <person name="Davies J."/>
            <person name="Deadman R."/>
            <person name="Dunn M."/>
            <person name="Earthrowl M."/>
            <person name="Ellington A.G."/>
            <person name="Errington H."/>
            <person name="Frankish A."/>
            <person name="Frankland J."/>
            <person name="French L."/>
            <person name="Garner P."/>
            <person name="Garnett J."/>
            <person name="Gay L."/>
            <person name="Ghori M.R.J."/>
            <person name="Gibson R."/>
            <person name="Gilby L.M."/>
            <person name="Gillett W."/>
            <person name="Glithero R.J."/>
            <person name="Grafham D.V."/>
            <person name="Griffiths C."/>
            <person name="Griffiths-Jones S."/>
            <person name="Grocock R."/>
            <person name="Hammond S."/>
            <person name="Harrison E.S.I."/>
            <person name="Hart E."/>
            <person name="Haugen E."/>
            <person name="Heath P.D."/>
            <person name="Holmes S."/>
            <person name="Holt K."/>
            <person name="Howden P.J."/>
            <person name="Hunt A.R."/>
            <person name="Hunt S.E."/>
            <person name="Hunter G."/>
            <person name="Isherwood J."/>
            <person name="James R."/>
            <person name="Johnson C."/>
            <person name="Johnson D."/>
            <person name="Joy A."/>
            <person name="Kay M."/>
            <person name="Kershaw J.K."/>
            <person name="Kibukawa M."/>
            <person name="Kimberley A.M."/>
            <person name="King A."/>
            <person name="Knights A.J."/>
            <person name="Lad H."/>
            <person name="Laird G."/>
            <person name="Lawlor S."/>
            <person name="Leongamornlert D.A."/>
            <person name="Lloyd D.M."/>
            <person name="Loveland J."/>
            <person name="Lovell J."/>
            <person name="Lush M.J."/>
            <person name="Lyne R."/>
            <person name="Martin S."/>
            <person name="Mashreghi-Mohammadi M."/>
            <person name="Matthews L."/>
            <person name="Matthews N.S.W."/>
            <person name="McLaren S."/>
            <person name="Milne S."/>
            <person name="Mistry S."/>
            <person name="Moore M.J.F."/>
            <person name="Nickerson T."/>
            <person name="O'Dell C.N."/>
            <person name="Oliver K."/>
            <person name="Palmeiri A."/>
            <person name="Palmer S.A."/>
            <person name="Parker A."/>
            <person name="Patel D."/>
            <person name="Pearce A.V."/>
            <person name="Peck A.I."/>
            <person name="Pelan S."/>
            <person name="Phelps K."/>
            <person name="Phillimore B.J."/>
            <person name="Plumb R."/>
            <person name="Rajan J."/>
            <person name="Raymond C."/>
            <person name="Rouse G."/>
            <person name="Saenphimmachak C."/>
            <person name="Sehra H.K."/>
            <person name="Sheridan E."/>
            <person name="Shownkeen R."/>
            <person name="Sims S."/>
            <person name="Skuce C.D."/>
            <person name="Smith M."/>
            <person name="Steward C."/>
            <person name="Subramanian S."/>
            <person name="Sycamore N."/>
            <person name="Tracey A."/>
            <person name="Tromans A."/>
            <person name="Van Helmond Z."/>
            <person name="Wall M."/>
            <person name="Wallis J.M."/>
            <person name="White S."/>
            <person name="Whitehead S.L."/>
            <person name="Wilkinson J.E."/>
            <person name="Willey D.L."/>
            <person name="Williams H."/>
            <person name="Wilming L."/>
            <person name="Wray P.W."/>
            <person name="Wu Z."/>
            <person name="Coulson A."/>
            <person name="Vaudin M."/>
            <person name="Sulston J.E."/>
            <person name="Durbin R.M."/>
            <person name="Hubbard T."/>
            <person name="Wooster R."/>
            <person name="Dunham I."/>
            <person name="Carter N.P."/>
            <person name="McVean G."/>
            <person name="Ross M.T."/>
            <person name="Harrow J."/>
            <person name="Olson M.V."/>
            <person name="Beck S."/>
            <person name="Rogers J."/>
            <person name="Bentley D.R."/>
        </authorList>
    </citation>
    <scope>NUCLEOTIDE SEQUENCE [LARGE SCALE GENOMIC DNA]</scope>
</reference>
<reference key="2">
    <citation type="journal article" date="1998" name="Nat. Genet.">
        <title>Distribution of olfactory receptor genes in the human genome.</title>
        <authorList>
            <person name="Rouquier S."/>
            <person name="Taviaux S."/>
            <person name="Trask B.J."/>
            <person name="Brand-Arpon V."/>
            <person name="Van den Engh G."/>
            <person name="Demaille J.G."/>
            <person name="Giorgi D."/>
        </authorList>
    </citation>
    <scope>NUCLEOTIDE SEQUENCE [GENOMIC DNA] OF 118-333</scope>
</reference>
<reference key="3">
    <citation type="journal article" date="2002" name="Genomics">
        <title>DEFOG: a practical scheme for deciphering families of genes.</title>
        <authorList>
            <person name="Fuchs T."/>
            <person name="Malecova B."/>
            <person name="Linhart C."/>
            <person name="Sharan R."/>
            <person name="Khen M."/>
            <person name="Herwig R."/>
            <person name="Shmulevich D."/>
            <person name="Elkon R."/>
            <person name="Steinfath M."/>
            <person name="O'Brien J.K."/>
            <person name="Radelof U."/>
            <person name="Lehrach H."/>
            <person name="Lancet D."/>
            <person name="Shamir R."/>
        </authorList>
    </citation>
    <scope>NUCLEOTIDE SEQUENCE [GENOMIC DNA] OF 118-333</scope>
</reference>
<reference key="4">
    <citation type="journal article" date="2004" name="Proc. Natl. Acad. Sci. U.S.A.">
        <title>The human olfactory receptor gene family.</title>
        <authorList>
            <person name="Malnic B."/>
            <person name="Godfrey P.A."/>
            <person name="Buck L.B."/>
        </authorList>
    </citation>
    <scope>IDENTIFICATION</scope>
</reference>
<reference key="5">
    <citation type="journal article" date="2004" name="Proc. Natl. Acad. Sci. U.S.A.">
        <authorList>
            <person name="Malnic B."/>
            <person name="Godfrey P.A."/>
            <person name="Buck L.B."/>
        </authorList>
    </citation>
    <scope>ERRATUM OF PUBMED:14983052</scope>
</reference>
<accession>O43869</accession>
<accession>Q6IEZ9</accession>
<gene>
    <name type="primary">OR2T1</name>
</gene>